<dbReference type="EC" id="3.6.1.27" evidence="1"/>
<dbReference type="EMBL" id="CP000282">
    <property type="protein sequence ID" value="ABD81492.1"/>
    <property type="molecule type" value="Genomic_DNA"/>
</dbReference>
<dbReference type="RefSeq" id="WP_011468710.1">
    <property type="nucleotide sequence ID" value="NC_007912.1"/>
</dbReference>
<dbReference type="SMR" id="Q21II7"/>
<dbReference type="STRING" id="203122.Sde_2232"/>
<dbReference type="GeneID" id="98613902"/>
<dbReference type="KEGG" id="sde:Sde_2232"/>
<dbReference type="eggNOG" id="COG1968">
    <property type="taxonomic scope" value="Bacteria"/>
</dbReference>
<dbReference type="HOGENOM" id="CLU_060296_1_0_6"/>
<dbReference type="OrthoDB" id="9808289at2"/>
<dbReference type="Proteomes" id="UP000001947">
    <property type="component" value="Chromosome"/>
</dbReference>
<dbReference type="GO" id="GO:0005886">
    <property type="term" value="C:plasma membrane"/>
    <property type="evidence" value="ECO:0007669"/>
    <property type="project" value="UniProtKB-SubCell"/>
</dbReference>
<dbReference type="GO" id="GO:0050380">
    <property type="term" value="F:undecaprenyl-diphosphatase activity"/>
    <property type="evidence" value="ECO:0007669"/>
    <property type="project" value="UniProtKB-UniRule"/>
</dbReference>
<dbReference type="GO" id="GO:0071555">
    <property type="term" value="P:cell wall organization"/>
    <property type="evidence" value="ECO:0007669"/>
    <property type="project" value="UniProtKB-KW"/>
</dbReference>
<dbReference type="GO" id="GO:0009252">
    <property type="term" value="P:peptidoglycan biosynthetic process"/>
    <property type="evidence" value="ECO:0007669"/>
    <property type="project" value="UniProtKB-KW"/>
</dbReference>
<dbReference type="GO" id="GO:0008360">
    <property type="term" value="P:regulation of cell shape"/>
    <property type="evidence" value="ECO:0007669"/>
    <property type="project" value="UniProtKB-KW"/>
</dbReference>
<dbReference type="GO" id="GO:0046677">
    <property type="term" value="P:response to antibiotic"/>
    <property type="evidence" value="ECO:0007669"/>
    <property type="project" value="UniProtKB-UniRule"/>
</dbReference>
<dbReference type="HAMAP" id="MF_01006">
    <property type="entry name" value="Undec_diphosphatase"/>
    <property type="match status" value="1"/>
</dbReference>
<dbReference type="InterPro" id="IPR003824">
    <property type="entry name" value="UppP"/>
</dbReference>
<dbReference type="NCBIfam" id="NF001393">
    <property type="entry name" value="PRK00281.2-4"/>
    <property type="match status" value="1"/>
</dbReference>
<dbReference type="NCBIfam" id="TIGR00753">
    <property type="entry name" value="undec_PP_bacA"/>
    <property type="match status" value="1"/>
</dbReference>
<dbReference type="PANTHER" id="PTHR30622">
    <property type="entry name" value="UNDECAPRENYL-DIPHOSPHATASE"/>
    <property type="match status" value="1"/>
</dbReference>
<dbReference type="PANTHER" id="PTHR30622:SF4">
    <property type="entry name" value="UNDECAPRENYL-DIPHOSPHATASE"/>
    <property type="match status" value="1"/>
</dbReference>
<dbReference type="Pfam" id="PF02673">
    <property type="entry name" value="BacA"/>
    <property type="match status" value="1"/>
</dbReference>
<evidence type="ECO:0000255" key="1">
    <source>
        <dbReference type="HAMAP-Rule" id="MF_01006"/>
    </source>
</evidence>
<sequence length="265" mass="28619">MDILHAVFLALIQGITEFLPISSSAHLILPKELFGWEDQGLAFDVAVHVGTLSAVILYFRKDIVNLIAGWFGSITGKQSENGSLAWCIIVATVPAGLFGLLLGNFIEEHLRSVSVIATTTVVFGLLLWFADAKHSETKQLAQMTLFIALVIGLAQALAMIPGTSRSGITITAALLLGFGRSDAARFSFLLSIPIITLSGGYMGLKLLEESNVNWQEIGVGVLVSAISAYICIHYFLSFINKIGMLPFVIYRLLLGAGLFALVWFA</sequence>
<protein>
    <recommendedName>
        <fullName evidence="1">Undecaprenyl-diphosphatase</fullName>
        <ecNumber evidence="1">3.6.1.27</ecNumber>
    </recommendedName>
    <alternativeName>
        <fullName evidence="1">Bacitracin resistance protein</fullName>
    </alternativeName>
    <alternativeName>
        <fullName evidence="1">Undecaprenyl pyrophosphate phosphatase</fullName>
    </alternativeName>
</protein>
<organism>
    <name type="scientific">Saccharophagus degradans (strain 2-40 / ATCC 43961 / DSM 17024)</name>
    <dbReference type="NCBI Taxonomy" id="203122"/>
    <lineage>
        <taxon>Bacteria</taxon>
        <taxon>Pseudomonadati</taxon>
        <taxon>Pseudomonadota</taxon>
        <taxon>Gammaproteobacteria</taxon>
        <taxon>Cellvibrionales</taxon>
        <taxon>Cellvibrionaceae</taxon>
        <taxon>Saccharophagus</taxon>
    </lineage>
</organism>
<accession>Q21II7</accession>
<gene>
    <name evidence="1" type="primary">uppP</name>
    <name type="ordered locus">Sde_2232</name>
</gene>
<comment type="function">
    <text evidence="1">Catalyzes the dephosphorylation of undecaprenyl diphosphate (UPP). Confers resistance to bacitracin.</text>
</comment>
<comment type="catalytic activity">
    <reaction evidence="1">
        <text>di-trans,octa-cis-undecaprenyl diphosphate + H2O = di-trans,octa-cis-undecaprenyl phosphate + phosphate + H(+)</text>
        <dbReference type="Rhea" id="RHEA:28094"/>
        <dbReference type="ChEBI" id="CHEBI:15377"/>
        <dbReference type="ChEBI" id="CHEBI:15378"/>
        <dbReference type="ChEBI" id="CHEBI:43474"/>
        <dbReference type="ChEBI" id="CHEBI:58405"/>
        <dbReference type="ChEBI" id="CHEBI:60392"/>
        <dbReference type="EC" id="3.6.1.27"/>
    </reaction>
</comment>
<comment type="subcellular location">
    <subcellularLocation>
        <location evidence="1">Cell inner membrane</location>
        <topology evidence="1">Multi-pass membrane protein</topology>
    </subcellularLocation>
</comment>
<comment type="miscellaneous">
    <text>Bacitracin is thought to be involved in the inhibition of peptidoglycan synthesis by sequestering undecaprenyl diphosphate, thereby reducing the pool of lipid carrier available.</text>
</comment>
<comment type="similarity">
    <text evidence="1">Belongs to the UppP family.</text>
</comment>
<reference key="1">
    <citation type="journal article" date="2008" name="PLoS Genet.">
        <title>Complete genome sequence of the complex carbohydrate-degrading marine bacterium, Saccharophagus degradans strain 2-40 T.</title>
        <authorList>
            <person name="Weiner R.M."/>
            <person name="Taylor L.E. II"/>
            <person name="Henrissat B."/>
            <person name="Hauser L."/>
            <person name="Land M."/>
            <person name="Coutinho P.M."/>
            <person name="Rancurel C."/>
            <person name="Saunders E.H."/>
            <person name="Longmire A.G."/>
            <person name="Zhang H."/>
            <person name="Bayer E.A."/>
            <person name="Gilbert H.J."/>
            <person name="Larimer F."/>
            <person name="Zhulin I.B."/>
            <person name="Ekborg N.A."/>
            <person name="Lamed R."/>
            <person name="Richardson P.M."/>
            <person name="Borovok I."/>
            <person name="Hutcheson S."/>
        </authorList>
    </citation>
    <scope>NUCLEOTIDE SEQUENCE [LARGE SCALE GENOMIC DNA]</scope>
    <source>
        <strain>2-40 / ATCC 43961 / DSM 17024</strain>
    </source>
</reference>
<proteinExistence type="inferred from homology"/>
<keyword id="KW-0046">Antibiotic resistance</keyword>
<keyword id="KW-0997">Cell inner membrane</keyword>
<keyword id="KW-1003">Cell membrane</keyword>
<keyword id="KW-0133">Cell shape</keyword>
<keyword id="KW-0961">Cell wall biogenesis/degradation</keyword>
<keyword id="KW-0378">Hydrolase</keyword>
<keyword id="KW-0472">Membrane</keyword>
<keyword id="KW-0573">Peptidoglycan synthesis</keyword>
<keyword id="KW-1185">Reference proteome</keyword>
<keyword id="KW-0812">Transmembrane</keyword>
<keyword id="KW-1133">Transmembrane helix</keyword>
<feature type="chain" id="PRO_0000250262" description="Undecaprenyl-diphosphatase">
    <location>
        <begin position="1"/>
        <end position="265"/>
    </location>
</feature>
<feature type="transmembrane region" description="Helical" evidence="1">
    <location>
        <begin position="1"/>
        <end position="21"/>
    </location>
</feature>
<feature type="transmembrane region" description="Helical" evidence="1">
    <location>
        <begin position="39"/>
        <end position="59"/>
    </location>
</feature>
<feature type="transmembrane region" description="Helical" evidence="1">
    <location>
        <begin position="86"/>
        <end position="106"/>
    </location>
</feature>
<feature type="transmembrane region" description="Helical" evidence="1">
    <location>
        <begin position="112"/>
        <end position="132"/>
    </location>
</feature>
<feature type="transmembrane region" description="Helical" evidence="1">
    <location>
        <begin position="140"/>
        <end position="160"/>
    </location>
</feature>
<feature type="transmembrane region" description="Helical" evidence="1">
    <location>
        <begin position="186"/>
        <end position="206"/>
    </location>
</feature>
<feature type="transmembrane region" description="Helical" evidence="1">
    <location>
        <begin position="219"/>
        <end position="239"/>
    </location>
</feature>
<feature type="transmembrane region" description="Helical" evidence="1">
    <location>
        <begin position="244"/>
        <end position="264"/>
    </location>
</feature>
<name>UPPP_SACD2</name>